<evidence type="ECO:0000250" key="1"/>
<evidence type="ECO:0000250" key="2">
    <source>
        <dbReference type="UniProtKB" id="Q96LT9"/>
    </source>
</evidence>
<evidence type="ECO:0000255" key="3">
    <source>
        <dbReference type="PROSITE-ProRule" id="PRU00176"/>
    </source>
</evidence>
<evidence type="ECO:0000256" key="4">
    <source>
        <dbReference type="SAM" id="MobiDB-lite"/>
    </source>
</evidence>
<evidence type="ECO:0007744" key="5">
    <source>
    </source>
</evidence>
<reference key="1">
    <citation type="journal article" date="2004" name="Nature">
        <title>Genome sequence of the Brown Norway rat yields insights into mammalian evolution.</title>
        <authorList>
            <person name="Gibbs R.A."/>
            <person name="Weinstock G.M."/>
            <person name="Metzker M.L."/>
            <person name="Muzny D.M."/>
            <person name="Sodergren E.J."/>
            <person name="Scherer S."/>
            <person name="Scott G."/>
            <person name="Steffen D."/>
            <person name="Worley K.C."/>
            <person name="Burch P.E."/>
            <person name="Okwuonu G."/>
            <person name="Hines S."/>
            <person name="Lewis L."/>
            <person name="Deramo C."/>
            <person name="Delgado O."/>
            <person name="Dugan-Rocha S."/>
            <person name="Miner G."/>
            <person name="Morgan M."/>
            <person name="Hawes A."/>
            <person name="Gill R."/>
            <person name="Holt R.A."/>
            <person name="Adams M.D."/>
            <person name="Amanatides P.G."/>
            <person name="Baden-Tillson H."/>
            <person name="Barnstead M."/>
            <person name="Chin S."/>
            <person name="Evans C.A."/>
            <person name="Ferriera S."/>
            <person name="Fosler C."/>
            <person name="Glodek A."/>
            <person name="Gu Z."/>
            <person name="Jennings D."/>
            <person name="Kraft C.L."/>
            <person name="Nguyen T."/>
            <person name="Pfannkoch C.M."/>
            <person name="Sitter C."/>
            <person name="Sutton G.G."/>
            <person name="Venter J.C."/>
            <person name="Woodage T."/>
            <person name="Smith D."/>
            <person name="Lee H.-M."/>
            <person name="Gustafson E."/>
            <person name="Cahill P."/>
            <person name="Kana A."/>
            <person name="Doucette-Stamm L."/>
            <person name="Weinstock K."/>
            <person name="Fechtel K."/>
            <person name="Weiss R.B."/>
            <person name="Dunn D.M."/>
            <person name="Green E.D."/>
            <person name="Blakesley R.W."/>
            <person name="Bouffard G.G."/>
            <person name="De Jong P.J."/>
            <person name="Osoegawa K."/>
            <person name="Zhu B."/>
            <person name="Marra M."/>
            <person name="Schein J."/>
            <person name="Bosdet I."/>
            <person name="Fjell C."/>
            <person name="Jones S."/>
            <person name="Krzywinski M."/>
            <person name="Mathewson C."/>
            <person name="Siddiqui A."/>
            <person name="Wye N."/>
            <person name="McPherson J."/>
            <person name="Zhao S."/>
            <person name="Fraser C.M."/>
            <person name="Shetty J."/>
            <person name="Shatsman S."/>
            <person name="Geer K."/>
            <person name="Chen Y."/>
            <person name="Abramzon S."/>
            <person name="Nierman W.C."/>
            <person name="Havlak P.H."/>
            <person name="Chen R."/>
            <person name="Durbin K.J."/>
            <person name="Egan A."/>
            <person name="Ren Y."/>
            <person name="Song X.-Z."/>
            <person name="Li B."/>
            <person name="Liu Y."/>
            <person name="Qin X."/>
            <person name="Cawley S."/>
            <person name="Cooney A.J."/>
            <person name="D'Souza L.M."/>
            <person name="Martin K."/>
            <person name="Wu J.Q."/>
            <person name="Gonzalez-Garay M.L."/>
            <person name="Jackson A.R."/>
            <person name="Kalafus K.J."/>
            <person name="McLeod M.P."/>
            <person name="Milosavljevic A."/>
            <person name="Virk D."/>
            <person name="Volkov A."/>
            <person name="Wheeler D.A."/>
            <person name="Zhang Z."/>
            <person name="Bailey J.A."/>
            <person name="Eichler E.E."/>
            <person name="Tuzun E."/>
            <person name="Birney E."/>
            <person name="Mongin E."/>
            <person name="Ureta-Vidal A."/>
            <person name="Woodwark C."/>
            <person name="Zdobnov E."/>
            <person name="Bork P."/>
            <person name="Suyama M."/>
            <person name="Torrents D."/>
            <person name="Alexandersson M."/>
            <person name="Trask B.J."/>
            <person name="Young J.M."/>
            <person name="Huang H."/>
            <person name="Wang H."/>
            <person name="Xing H."/>
            <person name="Daniels S."/>
            <person name="Gietzen D."/>
            <person name="Schmidt J."/>
            <person name="Stevens K."/>
            <person name="Vitt U."/>
            <person name="Wingrove J."/>
            <person name="Camara F."/>
            <person name="Mar Alba M."/>
            <person name="Abril J.F."/>
            <person name="Guigo R."/>
            <person name="Smit A."/>
            <person name="Dubchak I."/>
            <person name="Rubin E.M."/>
            <person name="Couronne O."/>
            <person name="Poliakov A."/>
            <person name="Huebner N."/>
            <person name="Ganten D."/>
            <person name="Goesele C."/>
            <person name="Hummel O."/>
            <person name="Kreitler T."/>
            <person name="Lee Y.-A."/>
            <person name="Monti J."/>
            <person name="Schulz H."/>
            <person name="Zimdahl H."/>
            <person name="Himmelbauer H."/>
            <person name="Lehrach H."/>
            <person name="Jacob H.J."/>
            <person name="Bromberg S."/>
            <person name="Gullings-Handley J."/>
            <person name="Jensen-Seaman M.I."/>
            <person name="Kwitek A.E."/>
            <person name="Lazar J."/>
            <person name="Pasko D."/>
            <person name="Tonellato P.J."/>
            <person name="Twigger S."/>
            <person name="Ponting C.P."/>
            <person name="Duarte J.M."/>
            <person name="Rice S."/>
            <person name="Goodstadt L."/>
            <person name="Beatson S.A."/>
            <person name="Emes R.D."/>
            <person name="Winter E.E."/>
            <person name="Webber C."/>
            <person name="Brandt P."/>
            <person name="Nyakatura G."/>
            <person name="Adetobi M."/>
            <person name="Chiaromonte F."/>
            <person name="Elnitski L."/>
            <person name="Eswara P."/>
            <person name="Hardison R.C."/>
            <person name="Hou M."/>
            <person name="Kolbe D."/>
            <person name="Makova K."/>
            <person name="Miller W."/>
            <person name="Nekrutenko A."/>
            <person name="Riemer C."/>
            <person name="Schwartz S."/>
            <person name="Taylor J."/>
            <person name="Yang S."/>
            <person name="Zhang Y."/>
            <person name="Lindpaintner K."/>
            <person name="Andrews T.D."/>
            <person name="Caccamo M."/>
            <person name="Clamp M."/>
            <person name="Clarke L."/>
            <person name="Curwen V."/>
            <person name="Durbin R.M."/>
            <person name="Eyras E."/>
            <person name="Searle S.M."/>
            <person name="Cooper G.M."/>
            <person name="Batzoglou S."/>
            <person name="Brudno M."/>
            <person name="Sidow A."/>
            <person name="Stone E.A."/>
            <person name="Payseur B.A."/>
            <person name="Bourque G."/>
            <person name="Lopez-Otin C."/>
            <person name="Puente X.S."/>
            <person name="Chakrabarti K."/>
            <person name="Chatterji S."/>
            <person name="Dewey C."/>
            <person name="Pachter L."/>
            <person name="Bray N."/>
            <person name="Yap V.B."/>
            <person name="Caspi A."/>
            <person name="Tesler G."/>
            <person name="Pevzner P.A."/>
            <person name="Haussler D."/>
            <person name="Roskin K.M."/>
            <person name="Baertsch R."/>
            <person name="Clawson H."/>
            <person name="Furey T.S."/>
            <person name="Hinrichs A.S."/>
            <person name="Karolchik D."/>
            <person name="Kent W.J."/>
            <person name="Rosenbloom K.R."/>
            <person name="Trumbower H."/>
            <person name="Weirauch M."/>
            <person name="Cooper D.N."/>
            <person name="Stenson P.D."/>
            <person name="Ma B."/>
            <person name="Brent M."/>
            <person name="Arumugam M."/>
            <person name="Shteynberg D."/>
            <person name="Copley R.R."/>
            <person name="Taylor M.S."/>
            <person name="Riethman H."/>
            <person name="Mudunuri U."/>
            <person name="Peterson J."/>
            <person name="Guyer M."/>
            <person name="Felsenfeld A."/>
            <person name="Old S."/>
            <person name="Mockrin S."/>
            <person name="Collins F.S."/>
        </authorList>
    </citation>
    <scope>NUCLEOTIDE SEQUENCE [LARGE SCALE GENOMIC DNA]</scope>
    <source>
        <strain>Brown Norway</strain>
    </source>
</reference>
<reference key="2">
    <citation type="journal article" date="2004" name="Genome Res.">
        <title>The status, quality, and expansion of the NIH full-length cDNA project: the Mammalian Gene Collection (MGC).</title>
        <authorList>
            <consortium name="The MGC Project Team"/>
        </authorList>
    </citation>
    <scope>NUCLEOTIDE SEQUENCE [LARGE SCALE MRNA] OF 93-515</scope>
    <source>
        <tissue>Thymus</tissue>
    </source>
</reference>
<reference key="3">
    <citation type="journal article" date="2012" name="Nat. Commun.">
        <title>Quantitative maps of protein phosphorylation sites across 14 different rat organs and tissues.</title>
        <authorList>
            <person name="Lundby A."/>
            <person name="Secher A."/>
            <person name="Lage K."/>
            <person name="Nordsborg N.B."/>
            <person name="Dmytriyev A."/>
            <person name="Lundby C."/>
            <person name="Olsen J.V."/>
        </authorList>
    </citation>
    <scope>PHOSPHORYLATION [LARGE SCALE ANALYSIS] AT SER-21 AND SER-349</scope>
    <scope>IDENTIFICATION BY MASS SPECTROMETRY [LARGE SCALE ANALYSIS]</scope>
</reference>
<gene>
    <name type="primary">Rnpc3</name>
    <name type="synonym">Rbm40</name>
</gene>
<proteinExistence type="evidence at protein level"/>
<name>RNPC3_RAT</name>
<protein>
    <recommendedName>
        <fullName>RNA-binding region-containing protein 3</fullName>
    </recommendedName>
    <alternativeName>
        <fullName>RNA-binding motif protein 40</fullName>
        <shortName>RNA-binding protein 40</shortName>
    </alternativeName>
</protein>
<keyword id="KW-0539">Nucleus</keyword>
<keyword id="KW-0597">Phosphoprotein</keyword>
<keyword id="KW-1185">Reference proteome</keyword>
<keyword id="KW-0677">Repeat</keyword>
<keyword id="KW-0694">RNA-binding</keyword>
<accession>Q4G055</accession>
<dbReference type="EMBL" id="AABR03021470">
    <property type="status" value="NOT_ANNOTATED_CDS"/>
    <property type="molecule type" value="Genomic_DNA"/>
</dbReference>
<dbReference type="EMBL" id="AABR03019434">
    <property type="status" value="NOT_ANNOTATED_CDS"/>
    <property type="molecule type" value="Genomic_DNA"/>
</dbReference>
<dbReference type="EMBL" id="AABR03018538">
    <property type="status" value="NOT_ANNOTATED_CDS"/>
    <property type="molecule type" value="Genomic_DNA"/>
</dbReference>
<dbReference type="EMBL" id="AABR03019699">
    <property type="status" value="NOT_ANNOTATED_CDS"/>
    <property type="molecule type" value="Genomic_DNA"/>
</dbReference>
<dbReference type="EMBL" id="BC098742">
    <property type="protein sequence ID" value="AAH98742.1"/>
    <property type="molecule type" value="mRNA"/>
</dbReference>
<dbReference type="RefSeq" id="NP_001094280.1">
    <property type="nucleotide sequence ID" value="NM_001100810.1"/>
</dbReference>
<dbReference type="RefSeq" id="XP_006233273.1">
    <property type="nucleotide sequence ID" value="XM_006233211.5"/>
</dbReference>
<dbReference type="RefSeq" id="XP_008759646.1">
    <property type="nucleotide sequence ID" value="XM_008761424.2"/>
</dbReference>
<dbReference type="SMR" id="Q4G055"/>
<dbReference type="FunCoup" id="Q4G055">
    <property type="interactions" value="1137"/>
</dbReference>
<dbReference type="STRING" id="10116.ENSRNOP00000070327"/>
<dbReference type="iPTMnet" id="Q4G055"/>
<dbReference type="PhosphoSitePlus" id="Q4G055"/>
<dbReference type="PaxDb" id="10116-ENSRNOP00000023366"/>
<dbReference type="Ensembl" id="ENSRNOT00000087714.2">
    <property type="protein sequence ID" value="ENSRNOP00000069232.1"/>
    <property type="gene ID" value="ENSRNOG00000017310.7"/>
</dbReference>
<dbReference type="GeneID" id="691538"/>
<dbReference type="KEGG" id="rno:691538"/>
<dbReference type="UCSC" id="RGD:1582776">
    <property type="organism name" value="rat"/>
</dbReference>
<dbReference type="AGR" id="RGD:1582776"/>
<dbReference type="CTD" id="55599"/>
<dbReference type="RGD" id="1582776">
    <property type="gene designation" value="Rnpc3"/>
</dbReference>
<dbReference type="eggNOG" id="KOG4206">
    <property type="taxonomic scope" value="Eukaryota"/>
</dbReference>
<dbReference type="GeneTree" id="ENSGT00530000063786"/>
<dbReference type="InParanoid" id="Q4G055"/>
<dbReference type="OMA" id="AINIRHE"/>
<dbReference type="OrthoDB" id="277802at2759"/>
<dbReference type="PhylomeDB" id="Q4G055"/>
<dbReference type="TreeFam" id="TF324298"/>
<dbReference type="Reactome" id="R-RNO-72165">
    <property type="pathway name" value="mRNA Splicing - Minor Pathway"/>
</dbReference>
<dbReference type="PRO" id="PR:Q4G055"/>
<dbReference type="Proteomes" id="UP000002494">
    <property type="component" value="Chromosome 2"/>
</dbReference>
<dbReference type="Bgee" id="ENSRNOG00000017310">
    <property type="expression patterns" value="Expressed in thymus and 20 other cell types or tissues"/>
</dbReference>
<dbReference type="ExpressionAtlas" id="Q4G055">
    <property type="expression patterns" value="baseline and differential"/>
</dbReference>
<dbReference type="GO" id="GO:0005654">
    <property type="term" value="C:nucleoplasm"/>
    <property type="evidence" value="ECO:0007669"/>
    <property type="project" value="Ensembl"/>
</dbReference>
<dbReference type="GO" id="GO:0005634">
    <property type="term" value="C:nucleus"/>
    <property type="evidence" value="ECO:0000266"/>
    <property type="project" value="RGD"/>
</dbReference>
<dbReference type="GO" id="GO:0005689">
    <property type="term" value="C:U12-type spliceosomal complex"/>
    <property type="evidence" value="ECO:0000266"/>
    <property type="project" value="RGD"/>
</dbReference>
<dbReference type="GO" id="GO:0097157">
    <property type="term" value="F:pre-mRNA intronic binding"/>
    <property type="evidence" value="ECO:0000318"/>
    <property type="project" value="GO_Central"/>
</dbReference>
<dbReference type="GO" id="GO:0030626">
    <property type="term" value="F:U12 snRNA binding"/>
    <property type="evidence" value="ECO:0000318"/>
    <property type="project" value="GO_Central"/>
</dbReference>
<dbReference type="GO" id="GO:0000398">
    <property type="term" value="P:mRNA splicing, via spliceosome"/>
    <property type="evidence" value="ECO:0000318"/>
    <property type="project" value="GO_Central"/>
</dbReference>
<dbReference type="CDD" id="cd12238">
    <property type="entry name" value="RRM1_RBM40_like"/>
    <property type="match status" value="1"/>
</dbReference>
<dbReference type="CDD" id="cd12239">
    <property type="entry name" value="RRM2_RBM40_like"/>
    <property type="match status" value="1"/>
</dbReference>
<dbReference type="FunFam" id="3.30.70.330:FF:000289">
    <property type="entry name" value="RNA-binding protein 40 isoform X1"/>
    <property type="match status" value="1"/>
</dbReference>
<dbReference type="FunFam" id="3.30.70.330:FF:000207">
    <property type="entry name" value="RNA-binding region (RNP1, RRM)-containing 3"/>
    <property type="match status" value="1"/>
</dbReference>
<dbReference type="Gene3D" id="3.30.70.330">
    <property type="match status" value="2"/>
</dbReference>
<dbReference type="Gene3D" id="6.10.250.610">
    <property type="match status" value="1"/>
</dbReference>
<dbReference type="InterPro" id="IPR012677">
    <property type="entry name" value="Nucleotide-bd_a/b_plait_sf"/>
</dbReference>
<dbReference type="InterPro" id="IPR035979">
    <property type="entry name" value="RBD_domain_sf"/>
</dbReference>
<dbReference type="InterPro" id="IPR034147">
    <property type="entry name" value="RBM40_RRM1"/>
</dbReference>
<dbReference type="InterPro" id="IPR045164">
    <property type="entry name" value="RBM41/RNPC3"/>
</dbReference>
<dbReference type="InterPro" id="IPR000504">
    <property type="entry name" value="RRM_dom"/>
</dbReference>
<dbReference type="PANTHER" id="PTHR16105">
    <property type="entry name" value="RNA-BINDING REGION-CONTAINING PROTEIN 3"/>
    <property type="match status" value="1"/>
</dbReference>
<dbReference type="PANTHER" id="PTHR16105:SF0">
    <property type="entry name" value="RNA-BINDING REGION-CONTAINING PROTEIN 3"/>
    <property type="match status" value="1"/>
</dbReference>
<dbReference type="Pfam" id="PF00076">
    <property type="entry name" value="RRM_1"/>
    <property type="match status" value="2"/>
</dbReference>
<dbReference type="SMART" id="SM00360">
    <property type="entry name" value="RRM"/>
    <property type="match status" value="2"/>
</dbReference>
<dbReference type="SUPFAM" id="SSF54928">
    <property type="entry name" value="RNA-binding domain, RBD"/>
    <property type="match status" value="2"/>
</dbReference>
<dbReference type="PROSITE" id="PS50102">
    <property type="entry name" value="RRM"/>
    <property type="match status" value="2"/>
</dbReference>
<organism>
    <name type="scientific">Rattus norvegicus</name>
    <name type="common">Rat</name>
    <dbReference type="NCBI Taxonomy" id="10116"/>
    <lineage>
        <taxon>Eukaryota</taxon>
        <taxon>Metazoa</taxon>
        <taxon>Chordata</taxon>
        <taxon>Craniata</taxon>
        <taxon>Vertebrata</taxon>
        <taxon>Euteleostomi</taxon>
        <taxon>Mammalia</taxon>
        <taxon>Eutheria</taxon>
        <taxon>Euarchontoglires</taxon>
        <taxon>Glires</taxon>
        <taxon>Rodentia</taxon>
        <taxon>Myomorpha</taxon>
        <taxon>Muroidea</taxon>
        <taxon>Muridae</taxon>
        <taxon>Murinae</taxon>
        <taxon>Rattus</taxon>
    </lineage>
</organism>
<sequence length="515" mass="58037">MAVPEPSMPLSRGGPGSASLSPPRGDRTLLVRHLPAELTAEEKEDLLKYFGAQSVRVLSDKGRLKHTAFATFPNEKAAIKALTRLHQLKLLGHTLVVEFAKEQDRVHSSCPASNAEKKKRLDDTVENDKEKKEPDVLTVENGIAPNHGLTFPLNSCLKYMYPPPSSTILANIVNALASVPKFYVQVLHLMNKMNLPTPFGPITARPPMYEDYVQLHAPLPPTSPQPPEEPPLPDEDEDLSSKESEYESSDEEDRQRMNKLMELANFQPKRPKTVKPRHVRKKRKIKDMLTVPSPASQSLHPVLLPSDVFDQPQPVGNKKIEFNISTNVPAALNKDLETEQNNEEKNSDSPDTGLDDSNTGFGKLFPKPNVNITEEIKEDSDEMPSQFISRRELEKGRISREEMETLSVFRSYEPGEPNCRIYVKNLARHVQEKDLKFIFGRYVDFSSETQRIMFDIRLMKEGRMKGQAFVGLPNEKAAAKALKEANGYVLFGKPMVVQFARSARPKHDSKEGKRK</sequence>
<comment type="function">
    <text evidence="1">Participates in pre-mRNA U12-dependent splicing, performed by the minor spliceosome which removes U12-type introns. U12-type introns comprises less than 1% of all non-coding sequences. Binds to the 3'-stem-loop of m(7)G-capped U12 snRNA (By similarity).</text>
</comment>
<comment type="subunit">
    <text evidence="1">Component of the U11/U12 snRNPs that are part of the U12-type spliceosome. Found in a complex with m(7)G-capped U12 snRNA. Interacts with PDCD7 (By similarity).</text>
</comment>
<comment type="subcellular location">
    <subcellularLocation>
        <location evidence="1">Nucleus</location>
    </subcellularLocation>
</comment>
<feature type="chain" id="PRO_0000311115" description="RNA-binding region-containing protein 3">
    <location>
        <begin position="1"/>
        <end position="515"/>
    </location>
</feature>
<feature type="domain" description="RRM 1" evidence="3">
    <location>
        <begin position="27"/>
        <end position="102"/>
    </location>
</feature>
<feature type="domain" description="RRM 2" evidence="3">
    <location>
        <begin position="419"/>
        <end position="502"/>
    </location>
</feature>
<feature type="region of interest" description="Disordered" evidence="4">
    <location>
        <begin position="1"/>
        <end position="26"/>
    </location>
</feature>
<feature type="region of interest" description="Disordered" evidence="4">
    <location>
        <begin position="107"/>
        <end position="133"/>
    </location>
</feature>
<feature type="region of interest" description="Disordered" evidence="4">
    <location>
        <begin position="215"/>
        <end position="254"/>
    </location>
</feature>
<feature type="region of interest" description="Disordered" evidence="4">
    <location>
        <begin position="337"/>
        <end position="369"/>
    </location>
</feature>
<feature type="compositionally biased region" description="Basic and acidic residues" evidence="4">
    <location>
        <begin position="115"/>
        <end position="133"/>
    </location>
</feature>
<feature type="compositionally biased region" description="Pro residues" evidence="4">
    <location>
        <begin position="218"/>
        <end position="230"/>
    </location>
</feature>
<feature type="compositionally biased region" description="Basic and acidic residues" evidence="4">
    <location>
        <begin position="337"/>
        <end position="348"/>
    </location>
</feature>
<feature type="modified residue" description="Phosphoserine" evidence="5">
    <location>
        <position position="21"/>
    </location>
</feature>
<feature type="modified residue" description="Phosphoserine" evidence="2">
    <location>
        <position position="108"/>
    </location>
</feature>
<feature type="modified residue" description="Phosphoserine" evidence="5">
    <location>
        <position position="349"/>
    </location>
</feature>